<name>DNAK_SALPK</name>
<proteinExistence type="inferred from homology"/>
<organism>
    <name type="scientific">Salmonella paratyphi A (strain AKU_12601)</name>
    <dbReference type="NCBI Taxonomy" id="554290"/>
    <lineage>
        <taxon>Bacteria</taxon>
        <taxon>Pseudomonadati</taxon>
        <taxon>Pseudomonadota</taxon>
        <taxon>Gammaproteobacteria</taxon>
        <taxon>Enterobacterales</taxon>
        <taxon>Enterobacteriaceae</taxon>
        <taxon>Salmonella</taxon>
    </lineage>
</organism>
<reference key="1">
    <citation type="journal article" date="2009" name="BMC Genomics">
        <title>Pseudogene accumulation in the evolutionary histories of Salmonella enterica serovars Paratyphi A and Typhi.</title>
        <authorList>
            <person name="Holt K.E."/>
            <person name="Thomson N.R."/>
            <person name="Wain J."/>
            <person name="Langridge G.C."/>
            <person name="Hasan R."/>
            <person name="Bhutta Z.A."/>
            <person name="Quail M.A."/>
            <person name="Norbertczak H."/>
            <person name="Walker D."/>
            <person name="Simmonds M."/>
            <person name="White B."/>
            <person name="Bason N."/>
            <person name="Mungall K."/>
            <person name="Dougan G."/>
            <person name="Parkhill J."/>
        </authorList>
    </citation>
    <scope>NUCLEOTIDE SEQUENCE [LARGE SCALE GENOMIC DNA]</scope>
    <source>
        <strain>AKU_12601</strain>
    </source>
</reference>
<keyword id="KW-0067">ATP-binding</keyword>
<keyword id="KW-0143">Chaperone</keyword>
<keyword id="KW-0547">Nucleotide-binding</keyword>
<keyword id="KW-0597">Phosphoprotein</keyword>
<keyword id="KW-0346">Stress response</keyword>
<evidence type="ECO:0000255" key="1">
    <source>
        <dbReference type="HAMAP-Rule" id="MF_00332"/>
    </source>
</evidence>
<evidence type="ECO:0000256" key="2">
    <source>
        <dbReference type="SAM" id="MobiDB-lite"/>
    </source>
</evidence>
<protein>
    <recommendedName>
        <fullName evidence="1">Chaperone protein DnaK</fullName>
    </recommendedName>
    <alternativeName>
        <fullName evidence="1">HSP70</fullName>
    </alternativeName>
    <alternativeName>
        <fullName evidence="1">Heat shock 70 kDa protein</fullName>
    </alternativeName>
    <alternativeName>
        <fullName evidence="1">Heat shock protein 70</fullName>
    </alternativeName>
</protein>
<accession>B5BLH8</accession>
<comment type="function">
    <text evidence="1">Acts as a chaperone.</text>
</comment>
<comment type="induction">
    <text evidence="1">By stress conditions e.g. heat shock.</text>
</comment>
<comment type="similarity">
    <text evidence="1">Belongs to the heat shock protein 70 family.</text>
</comment>
<gene>
    <name evidence="1" type="primary">dnaK</name>
    <name type="ordered locus">SSPA0011</name>
</gene>
<dbReference type="EMBL" id="FM200053">
    <property type="protein sequence ID" value="CAR58119.1"/>
    <property type="molecule type" value="Genomic_DNA"/>
</dbReference>
<dbReference type="RefSeq" id="WP_000516126.1">
    <property type="nucleotide sequence ID" value="NC_011147.1"/>
</dbReference>
<dbReference type="SMR" id="B5BLH8"/>
<dbReference type="GeneID" id="66754552"/>
<dbReference type="KEGG" id="sek:SSPA0011"/>
<dbReference type="HOGENOM" id="CLU_005965_2_1_6"/>
<dbReference type="Proteomes" id="UP000001869">
    <property type="component" value="Chromosome"/>
</dbReference>
<dbReference type="GO" id="GO:0005524">
    <property type="term" value="F:ATP binding"/>
    <property type="evidence" value="ECO:0007669"/>
    <property type="project" value="UniProtKB-UniRule"/>
</dbReference>
<dbReference type="GO" id="GO:0140662">
    <property type="term" value="F:ATP-dependent protein folding chaperone"/>
    <property type="evidence" value="ECO:0007669"/>
    <property type="project" value="InterPro"/>
</dbReference>
<dbReference type="GO" id="GO:0051082">
    <property type="term" value="F:unfolded protein binding"/>
    <property type="evidence" value="ECO:0007669"/>
    <property type="project" value="InterPro"/>
</dbReference>
<dbReference type="CDD" id="cd10234">
    <property type="entry name" value="ASKHA_NBD_HSP70_DnaK-like"/>
    <property type="match status" value="1"/>
</dbReference>
<dbReference type="FunFam" id="2.60.34.10:FF:000014">
    <property type="entry name" value="Chaperone protein DnaK HSP70"/>
    <property type="match status" value="1"/>
</dbReference>
<dbReference type="FunFam" id="1.20.1270.10:FF:000001">
    <property type="entry name" value="Molecular chaperone DnaK"/>
    <property type="match status" value="1"/>
</dbReference>
<dbReference type="FunFam" id="3.30.420.40:FF:000004">
    <property type="entry name" value="Molecular chaperone DnaK"/>
    <property type="match status" value="1"/>
</dbReference>
<dbReference type="FunFam" id="3.90.640.10:FF:000003">
    <property type="entry name" value="Molecular chaperone DnaK"/>
    <property type="match status" value="1"/>
</dbReference>
<dbReference type="Gene3D" id="1.20.1270.10">
    <property type="match status" value="1"/>
</dbReference>
<dbReference type="Gene3D" id="3.30.420.40">
    <property type="match status" value="2"/>
</dbReference>
<dbReference type="Gene3D" id="3.90.640.10">
    <property type="entry name" value="Actin, Chain A, domain 4"/>
    <property type="match status" value="1"/>
</dbReference>
<dbReference type="Gene3D" id="2.60.34.10">
    <property type="entry name" value="Substrate Binding Domain Of DNAk, Chain A, domain 1"/>
    <property type="match status" value="1"/>
</dbReference>
<dbReference type="HAMAP" id="MF_00332">
    <property type="entry name" value="DnaK"/>
    <property type="match status" value="1"/>
</dbReference>
<dbReference type="InterPro" id="IPR043129">
    <property type="entry name" value="ATPase_NBD"/>
</dbReference>
<dbReference type="InterPro" id="IPR012725">
    <property type="entry name" value="Chaperone_DnaK"/>
</dbReference>
<dbReference type="InterPro" id="IPR018181">
    <property type="entry name" value="Heat_shock_70_CS"/>
</dbReference>
<dbReference type="InterPro" id="IPR029048">
    <property type="entry name" value="HSP70_C_sf"/>
</dbReference>
<dbReference type="InterPro" id="IPR029047">
    <property type="entry name" value="HSP70_peptide-bd_sf"/>
</dbReference>
<dbReference type="InterPro" id="IPR013126">
    <property type="entry name" value="Hsp_70_fam"/>
</dbReference>
<dbReference type="NCBIfam" id="NF001413">
    <property type="entry name" value="PRK00290.1"/>
    <property type="match status" value="1"/>
</dbReference>
<dbReference type="NCBIfam" id="NF003520">
    <property type="entry name" value="PRK05183.1"/>
    <property type="match status" value="1"/>
</dbReference>
<dbReference type="NCBIfam" id="TIGR02350">
    <property type="entry name" value="prok_dnaK"/>
    <property type="match status" value="1"/>
</dbReference>
<dbReference type="PANTHER" id="PTHR19375">
    <property type="entry name" value="HEAT SHOCK PROTEIN 70KDA"/>
    <property type="match status" value="1"/>
</dbReference>
<dbReference type="Pfam" id="PF00012">
    <property type="entry name" value="HSP70"/>
    <property type="match status" value="1"/>
</dbReference>
<dbReference type="PRINTS" id="PR00301">
    <property type="entry name" value="HEATSHOCK70"/>
</dbReference>
<dbReference type="SUPFAM" id="SSF53067">
    <property type="entry name" value="Actin-like ATPase domain"/>
    <property type="match status" value="2"/>
</dbReference>
<dbReference type="SUPFAM" id="SSF100934">
    <property type="entry name" value="Heat shock protein 70kD (HSP70), C-terminal subdomain"/>
    <property type="match status" value="1"/>
</dbReference>
<dbReference type="SUPFAM" id="SSF100920">
    <property type="entry name" value="Heat shock protein 70kD (HSP70), peptide-binding domain"/>
    <property type="match status" value="1"/>
</dbReference>
<dbReference type="PROSITE" id="PS00297">
    <property type="entry name" value="HSP70_1"/>
    <property type="match status" value="1"/>
</dbReference>
<dbReference type="PROSITE" id="PS00329">
    <property type="entry name" value="HSP70_2"/>
    <property type="match status" value="1"/>
</dbReference>
<dbReference type="PROSITE" id="PS01036">
    <property type="entry name" value="HSP70_3"/>
    <property type="match status" value="1"/>
</dbReference>
<sequence>MGKIIGIDLGTTNSCVAIMDGTQARVLENAEGDRTTPSIIAYTQDGETLVGQPAKRQAVTNPQNTLFAIKRLIGRRFQDEEVQRDVSIMPYKIIGADNGDAWLDVKGQKMAPPQISAEVLKKMKKTAEDYLGEPVTEAVITVPAYFNDAQRQATKDAGRIAGLEVKRIINEPTAAALAYGLDKEVGNRTIAVYDLGGGTFDISIIEIDEVDGEKTFEVLATNGDTHLGGEDFDTRLINYLVDEFKKDQGIDLRNDPLAMQRLKEAAEKAKIELSSAQQTDVNLPYITADATGPKHMNIKVTRAKLESLVEDLVNRSIEPLKVALQDAGLSVSDINDVILVGGQTRMPMVQKKVAEFFGKEPRKDVNPDEAVAIGAAVQGGVLTGDVKDVLLLDVTPLSLGIETMGGVMTPLITKNTTIPTKHSQVFSTAEDNQSAVTIHVLQGERKRASDNKSLGQFNLDGINPAPRGMPQIEVTFDIDADGILHVSAKDKNSGKEQKITIKASSGLNEEEIQKMVRDAEANAESDRKFEELVQTRNQGDHLLHSTRKQVEEAGDKLPADDKTAIESALSALETALKGEDKAAIEAKMQELAQVSQKLMEIAQQQHAQQQAGSADASANNAKDDDVVDAEFEEVKDKK</sequence>
<feature type="chain" id="PRO_1000119755" description="Chaperone protein DnaK">
    <location>
        <begin position="1"/>
        <end position="638"/>
    </location>
</feature>
<feature type="region of interest" description="Disordered" evidence="2">
    <location>
        <begin position="603"/>
        <end position="638"/>
    </location>
</feature>
<feature type="compositionally biased region" description="Low complexity" evidence="2">
    <location>
        <begin position="603"/>
        <end position="620"/>
    </location>
</feature>
<feature type="modified residue" description="Phosphothreonine; by autocatalysis" evidence="1">
    <location>
        <position position="199"/>
    </location>
</feature>